<accession>A1TEQ0</accession>
<sequence>MGSDITATPAWQALSRHHDEIRAKDLRGLFADDPTRGTGFALTVGDLYIDYSKHRVTRETLDLLLDLARTAGLPAKRDAMFSGAHINTSEDRAVLHTALRLPRDASLTVDGQDVVADVHEVLDRMGDFTDRLRSGEWRGATGERITTVVNIGIGGSDLGPVMVDQALRHYADAGISARFVSNVDPADLVAKLNGLDPATTLFIIASKTFSTLETLTNATAARRWLVDGLGGSAGQDAVSKHFVAVSTNAKLVDDFGIDTANMFGFWDWVGGRYSVDSAIGLSVMAVIGRERFAEFLAGFHLVDEHFRSAPLEANAPVLLGLIGLWYSNFFGAETRAVLPYSNDLARFAAYLQQLTMESNGKSVRADGTPVSTGTGEIFWGEPGTNGQHAFYQLLHQGTRLVPADFIGFSEPTDDLPTADGTGSMHDLLMSNFFAQTQVLAFGKTAEEITGEGTPPNVVPHKVMPGNRPSTSILATKLTPSVVGQLIALYEHQVFVEGVIWGIDSFDQWGVELGKTQAKALLPVLTGADSPAAQSDSSTDALVRRYRTERGRTA</sequence>
<keyword id="KW-0963">Cytoplasm</keyword>
<keyword id="KW-0312">Gluconeogenesis</keyword>
<keyword id="KW-0324">Glycolysis</keyword>
<keyword id="KW-0413">Isomerase</keyword>
<name>G6PI_MYCVP</name>
<protein>
    <recommendedName>
        <fullName evidence="1">Glucose-6-phosphate isomerase</fullName>
        <shortName evidence="1">GPI</shortName>
        <ecNumber evidence="1">5.3.1.9</ecNumber>
    </recommendedName>
    <alternativeName>
        <fullName evidence="1">Phosphoglucose isomerase</fullName>
        <shortName evidence="1">PGI</shortName>
    </alternativeName>
    <alternativeName>
        <fullName evidence="1">Phosphohexose isomerase</fullName>
        <shortName evidence="1">PHI</shortName>
    </alternativeName>
</protein>
<reference key="1">
    <citation type="submission" date="2006-12" db="EMBL/GenBank/DDBJ databases">
        <title>Complete sequence of Mycobacterium vanbaalenii PYR-1.</title>
        <authorList>
            <consortium name="US DOE Joint Genome Institute"/>
            <person name="Copeland A."/>
            <person name="Lucas S."/>
            <person name="Lapidus A."/>
            <person name="Barry K."/>
            <person name="Detter J.C."/>
            <person name="Glavina del Rio T."/>
            <person name="Hammon N."/>
            <person name="Israni S."/>
            <person name="Dalin E."/>
            <person name="Tice H."/>
            <person name="Pitluck S."/>
            <person name="Singan V."/>
            <person name="Schmutz J."/>
            <person name="Larimer F."/>
            <person name="Land M."/>
            <person name="Hauser L."/>
            <person name="Kyrpides N."/>
            <person name="Anderson I.J."/>
            <person name="Miller C."/>
            <person name="Richardson P."/>
        </authorList>
    </citation>
    <scope>NUCLEOTIDE SEQUENCE [LARGE SCALE GENOMIC DNA]</scope>
    <source>
        <strain>DSM 7251 / JCM 13017 / BCRC 16820 / KCTC 9966 / NRRL B-24157 / PYR-1</strain>
    </source>
</reference>
<organism>
    <name type="scientific">Mycolicibacterium vanbaalenii (strain DSM 7251 / JCM 13017 / BCRC 16820 / KCTC 9966 / NRRL B-24157 / PYR-1)</name>
    <name type="common">Mycobacterium vanbaalenii</name>
    <dbReference type="NCBI Taxonomy" id="350058"/>
    <lineage>
        <taxon>Bacteria</taxon>
        <taxon>Bacillati</taxon>
        <taxon>Actinomycetota</taxon>
        <taxon>Actinomycetes</taxon>
        <taxon>Mycobacteriales</taxon>
        <taxon>Mycobacteriaceae</taxon>
        <taxon>Mycolicibacterium</taxon>
    </lineage>
</organism>
<evidence type="ECO:0000255" key="1">
    <source>
        <dbReference type="HAMAP-Rule" id="MF_00473"/>
    </source>
</evidence>
<evidence type="ECO:0000256" key="2">
    <source>
        <dbReference type="SAM" id="MobiDB-lite"/>
    </source>
</evidence>
<proteinExistence type="inferred from homology"/>
<comment type="function">
    <text evidence="1">Catalyzes the reversible isomerization of glucose-6-phosphate to fructose-6-phosphate.</text>
</comment>
<comment type="catalytic activity">
    <reaction evidence="1">
        <text>alpha-D-glucose 6-phosphate = beta-D-fructose 6-phosphate</text>
        <dbReference type="Rhea" id="RHEA:11816"/>
        <dbReference type="ChEBI" id="CHEBI:57634"/>
        <dbReference type="ChEBI" id="CHEBI:58225"/>
        <dbReference type="EC" id="5.3.1.9"/>
    </reaction>
</comment>
<comment type="pathway">
    <text evidence="1">Carbohydrate biosynthesis; gluconeogenesis.</text>
</comment>
<comment type="pathway">
    <text evidence="1">Carbohydrate degradation; glycolysis; D-glyceraldehyde 3-phosphate and glycerone phosphate from D-glucose: step 2/4.</text>
</comment>
<comment type="subcellular location">
    <subcellularLocation>
        <location evidence="1">Cytoplasm</location>
    </subcellularLocation>
</comment>
<comment type="similarity">
    <text evidence="1">Belongs to the GPI family.</text>
</comment>
<gene>
    <name evidence="1" type="primary">pgi</name>
    <name type="ordered locus">Mvan_4877</name>
</gene>
<dbReference type="EC" id="5.3.1.9" evidence="1"/>
<dbReference type="EMBL" id="CP000511">
    <property type="protein sequence ID" value="ABM15650.1"/>
    <property type="molecule type" value="Genomic_DNA"/>
</dbReference>
<dbReference type="RefSeq" id="WP_011782023.1">
    <property type="nucleotide sequence ID" value="NZ_JACKSD010000270.1"/>
</dbReference>
<dbReference type="SMR" id="A1TEQ0"/>
<dbReference type="STRING" id="350058.Mvan_4877"/>
<dbReference type="KEGG" id="mva:Mvan_4877"/>
<dbReference type="eggNOG" id="COG0166">
    <property type="taxonomic scope" value="Bacteria"/>
</dbReference>
<dbReference type="HOGENOM" id="CLU_017947_3_1_11"/>
<dbReference type="UniPathway" id="UPA00109">
    <property type="reaction ID" value="UER00181"/>
</dbReference>
<dbReference type="UniPathway" id="UPA00138"/>
<dbReference type="Proteomes" id="UP000009159">
    <property type="component" value="Chromosome"/>
</dbReference>
<dbReference type="GO" id="GO:0005829">
    <property type="term" value="C:cytosol"/>
    <property type="evidence" value="ECO:0007669"/>
    <property type="project" value="TreeGrafter"/>
</dbReference>
<dbReference type="GO" id="GO:0097367">
    <property type="term" value="F:carbohydrate derivative binding"/>
    <property type="evidence" value="ECO:0007669"/>
    <property type="project" value="InterPro"/>
</dbReference>
<dbReference type="GO" id="GO:0004347">
    <property type="term" value="F:glucose-6-phosphate isomerase activity"/>
    <property type="evidence" value="ECO:0007669"/>
    <property type="project" value="UniProtKB-UniRule"/>
</dbReference>
<dbReference type="GO" id="GO:0048029">
    <property type="term" value="F:monosaccharide binding"/>
    <property type="evidence" value="ECO:0007669"/>
    <property type="project" value="TreeGrafter"/>
</dbReference>
<dbReference type="GO" id="GO:0006094">
    <property type="term" value="P:gluconeogenesis"/>
    <property type="evidence" value="ECO:0007669"/>
    <property type="project" value="UniProtKB-UniRule"/>
</dbReference>
<dbReference type="GO" id="GO:0051156">
    <property type="term" value="P:glucose 6-phosphate metabolic process"/>
    <property type="evidence" value="ECO:0007669"/>
    <property type="project" value="TreeGrafter"/>
</dbReference>
<dbReference type="GO" id="GO:0006096">
    <property type="term" value="P:glycolytic process"/>
    <property type="evidence" value="ECO:0007669"/>
    <property type="project" value="UniProtKB-UniRule"/>
</dbReference>
<dbReference type="CDD" id="cd05015">
    <property type="entry name" value="SIS_PGI_1"/>
    <property type="match status" value="1"/>
</dbReference>
<dbReference type="CDD" id="cd05016">
    <property type="entry name" value="SIS_PGI_2"/>
    <property type="match status" value="1"/>
</dbReference>
<dbReference type="FunFam" id="3.40.50.10490:FF:000018">
    <property type="entry name" value="Glucose-6-phosphate isomerase"/>
    <property type="match status" value="1"/>
</dbReference>
<dbReference type="Gene3D" id="1.10.1390.10">
    <property type="match status" value="1"/>
</dbReference>
<dbReference type="Gene3D" id="3.40.50.10490">
    <property type="entry name" value="Glucose-6-phosphate isomerase like protein, domain 1"/>
    <property type="match status" value="2"/>
</dbReference>
<dbReference type="HAMAP" id="MF_00473">
    <property type="entry name" value="G6P_isomerase"/>
    <property type="match status" value="1"/>
</dbReference>
<dbReference type="InterPro" id="IPR001672">
    <property type="entry name" value="G6P_Isomerase"/>
</dbReference>
<dbReference type="InterPro" id="IPR023096">
    <property type="entry name" value="G6P_Isomerase_C"/>
</dbReference>
<dbReference type="InterPro" id="IPR018189">
    <property type="entry name" value="Phosphoglucose_isomerase_CS"/>
</dbReference>
<dbReference type="InterPro" id="IPR046348">
    <property type="entry name" value="SIS_dom_sf"/>
</dbReference>
<dbReference type="InterPro" id="IPR035476">
    <property type="entry name" value="SIS_PGI_1"/>
</dbReference>
<dbReference type="InterPro" id="IPR035482">
    <property type="entry name" value="SIS_PGI_2"/>
</dbReference>
<dbReference type="NCBIfam" id="NF001211">
    <property type="entry name" value="PRK00179.1"/>
    <property type="match status" value="1"/>
</dbReference>
<dbReference type="PANTHER" id="PTHR11469">
    <property type="entry name" value="GLUCOSE-6-PHOSPHATE ISOMERASE"/>
    <property type="match status" value="1"/>
</dbReference>
<dbReference type="PANTHER" id="PTHR11469:SF1">
    <property type="entry name" value="GLUCOSE-6-PHOSPHATE ISOMERASE"/>
    <property type="match status" value="1"/>
</dbReference>
<dbReference type="Pfam" id="PF00342">
    <property type="entry name" value="PGI"/>
    <property type="match status" value="1"/>
</dbReference>
<dbReference type="PRINTS" id="PR00662">
    <property type="entry name" value="G6PISOMERASE"/>
</dbReference>
<dbReference type="SUPFAM" id="SSF53697">
    <property type="entry name" value="SIS domain"/>
    <property type="match status" value="1"/>
</dbReference>
<dbReference type="PROSITE" id="PS00765">
    <property type="entry name" value="P_GLUCOSE_ISOMERASE_1"/>
    <property type="match status" value="1"/>
</dbReference>
<dbReference type="PROSITE" id="PS00174">
    <property type="entry name" value="P_GLUCOSE_ISOMERASE_2"/>
    <property type="match status" value="1"/>
</dbReference>
<dbReference type="PROSITE" id="PS51463">
    <property type="entry name" value="P_GLUCOSE_ISOMERASE_3"/>
    <property type="match status" value="1"/>
</dbReference>
<feature type="chain" id="PRO_1000013992" description="Glucose-6-phosphate isomerase">
    <location>
        <begin position="1"/>
        <end position="553"/>
    </location>
</feature>
<feature type="region of interest" description="Disordered" evidence="2">
    <location>
        <begin position="527"/>
        <end position="553"/>
    </location>
</feature>
<feature type="compositionally biased region" description="Basic and acidic residues" evidence="2">
    <location>
        <begin position="541"/>
        <end position="553"/>
    </location>
</feature>
<feature type="active site" description="Proton donor" evidence="1">
    <location>
        <position position="357"/>
    </location>
</feature>
<feature type="active site" evidence="1">
    <location>
        <position position="388"/>
    </location>
</feature>
<feature type="active site" evidence="1">
    <location>
        <position position="514"/>
    </location>
</feature>